<dbReference type="EMBL" id="AF214932">
    <property type="protein sequence ID" value="AAG60360.1"/>
    <property type="molecule type" value="mRNA"/>
</dbReference>
<dbReference type="ConoServer" id="619">
    <property type="toxin name" value="Vn3.1 precursor"/>
</dbReference>
<dbReference type="GO" id="GO:0005576">
    <property type="term" value="C:extracellular region"/>
    <property type="evidence" value="ECO:0007669"/>
    <property type="project" value="UniProtKB-SubCell"/>
</dbReference>
<dbReference type="GO" id="GO:0008200">
    <property type="term" value="F:ion channel inhibitor activity"/>
    <property type="evidence" value="ECO:0007669"/>
    <property type="project" value="InterPro"/>
</dbReference>
<dbReference type="GO" id="GO:0090729">
    <property type="term" value="F:toxin activity"/>
    <property type="evidence" value="ECO:0007669"/>
    <property type="project" value="UniProtKB-KW"/>
</dbReference>
<dbReference type="InterPro" id="IPR004214">
    <property type="entry name" value="Conotoxin"/>
</dbReference>
<dbReference type="Pfam" id="PF02950">
    <property type="entry name" value="Conotoxin"/>
    <property type="match status" value="1"/>
</dbReference>
<comment type="subcellular location">
    <subcellularLocation>
        <location evidence="1">Secreted</location>
    </subcellularLocation>
</comment>
<comment type="tissue specificity">
    <text>Expressed by the venom duct.</text>
</comment>
<comment type="domain">
    <text>The cysteine framework is III (CC-C-C-CC). Classified in the M-2 branch, since 2 residues stand between the fourth and the fifth cysteine residues.</text>
</comment>
<comment type="similarity">
    <text evidence="4">Belongs to the conotoxin M superfamily.</text>
</comment>
<feature type="signal peptide" evidence="3">
    <location>
        <begin position="1"/>
        <end position="20"/>
    </location>
</feature>
<feature type="propeptide" id="PRO_0000404890" evidence="1">
    <location>
        <begin position="21"/>
        <end position="52"/>
    </location>
</feature>
<feature type="peptide" id="PRO_0000404891" description="Conotoxin VnMMSK-02">
    <location>
        <begin position="53"/>
        <end position="66"/>
    </location>
</feature>
<feature type="modified residue" description="Pyrrolidone carboxylic acid" evidence="1">
    <location>
        <position position="53"/>
    </location>
</feature>
<feature type="modified residue" description="4-hydroxyproline" evidence="1">
    <location>
        <position position="64"/>
    </location>
</feature>
<feature type="modified residue" description="Cysteine amide" evidence="1">
    <location>
        <position position="66"/>
    </location>
</feature>
<feature type="disulfide bond" evidence="2">
    <location>
        <begin position="54"/>
        <end position="66"/>
    </location>
</feature>
<feature type="disulfide bond" evidence="2">
    <location>
        <begin position="55"/>
        <end position="62"/>
    </location>
</feature>
<feature type="disulfide bond" evidence="2">
    <location>
        <begin position="59"/>
        <end position="65"/>
    </location>
</feature>
<sequence>MMSKLGALLTICLLLFPLTALPLDGDQPADRPAERMQDDISSEQHPLFDKERQCCTGSCLNCWPCCG</sequence>
<proteinExistence type="evidence at transcript level"/>
<keyword id="KW-0027">Amidation</keyword>
<keyword id="KW-1015">Disulfide bond</keyword>
<keyword id="KW-0379">Hydroxylation</keyword>
<keyword id="KW-0528">Neurotoxin</keyword>
<keyword id="KW-0873">Pyrrolidone carboxylic acid</keyword>
<keyword id="KW-0964">Secreted</keyword>
<keyword id="KW-0732">Signal</keyword>
<keyword id="KW-0800">Toxin</keyword>
<evidence type="ECO:0000250" key="1"/>
<evidence type="ECO:0000250" key="2">
    <source>
        <dbReference type="UniProtKB" id="P0CI24"/>
    </source>
</evidence>
<evidence type="ECO:0000255" key="3"/>
<evidence type="ECO:0000305" key="4"/>
<accession>Q9BPJ2</accession>
<organism>
    <name type="scientific">Conus ventricosus</name>
    <name type="common">Mediterranean cone</name>
    <dbReference type="NCBI Taxonomy" id="117992"/>
    <lineage>
        <taxon>Eukaryota</taxon>
        <taxon>Metazoa</taxon>
        <taxon>Spiralia</taxon>
        <taxon>Lophotrochozoa</taxon>
        <taxon>Mollusca</taxon>
        <taxon>Gastropoda</taxon>
        <taxon>Caenogastropoda</taxon>
        <taxon>Neogastropoda</taxon>
        <taxon>Conoidea</taxon>
        <taxon>Conidae</taxon>
        <taxon>Conus</taxon>
        <taxon>Lautoconus</taxon>
    </lineage>
</organism>
<reference key="1">
    <citation type="journal article" date="2001" name="Mol. Biol. Evol.">
        <title>Mechanisms for evolving hypervariability: the case of conopeptides.</title>
        <authorList>
            <person name="Conticello S.G."/>
            <person name="Gilad Y."/>
            <person name="Avidan N."/>
            <person name="Ben-Asher E."/>
            <person name="Levy Z."/>
            <person name="Fainzilber M."/>
        </authorList>
    </citation>
    <scope>NUCLEOTIDE SEQUENCE [MRNA]</scope>
    <source>
        <tissue>Venom duct</tissue>
    </source>
</reference>
<protein>
    <recommendedName>
        <fullName>Conotoxin VnMMSK-02</fullName>
    </recommendedName>
</protein>
<name>M231_CONVE</name>